<proteinExistence type="evidence at transcript level"/>
<organism>
    <name type="scientific">Sus scrofa</name>
    <name type="common">Pig</name>
    <dbReference type="NCBI Taxonomy" id="9823"/>
    <lineage>
        <taxon>Eukaryota</taxon>
        <taxon>Metazoa</taxon>
        <taxon>Chordata</taxon>
        <taxon>Craniata</taxon>
        <taxon>Vertebrata</taxon>
        <taxon>Euteleostomi</taxon>
        <taxon>Mammalia</taxon>
        <taxon>Eutheria</taxon>
        <taxon>Laurasiatheria</taxon>
        <taxon>Artiodactyla</taxon>
        <taxon>Suina</taxon>
        <taxon>Suidae</taxon>
        <taxon>Sus</taxon>
    </lineage>
</organism>
<name>KCRB_PIG</name>
<protein>
    <recommendedName>
        <fullName>Creatine kinase B-type</fullName>
        <ecNumber>2.7.3.2</ecNumber>
    </recommendedName>
    <alternativeName>
        <fullName>B-CK</fullName>
    </alternativeName>
    <alternativeName>
        <fullName>Creatine kinase B chain</fullName>
    </alternativeName>
    <alternativeName>
        <fullName>Creatine phosphokinase M-type</fullName>
        <shortName>CPK-B</shortName>
    </alternativeName>
</protein>
<gene>
    <name type="primary">CKB</name>
</gene>
<dbReference type="EC" id="2.7.3.2"/>
<dbReference type="EMBL" id="AK239922">
    <property type="status" value="NOT_ANNOTATED_CDS"/>
    <property type="molecule type" value="mRNA"/>
</dbReference>
<dbReference type="EMBL" id="F14775">
    <property type="protein sequence ID" value="CAA23244.1"/>
    <property type="molecule type" value="mRNA"/>
</dbReference>
<dbReference type="RefSeq" id="NP_001230504.1">
    <property type="nucleotide sequence ID" value="NM_001243575.1"/>
</dbReference>
<dbReference type="SMR" id="Q29594"/>
<dbReference type="FunCoup" id="Q29594">
    <property type="interactions" value="729"/>
</dbReference>
<dbReference type="STRING" id="9823.ENSSSCP00000072090"/>
<dbReference type="PaxDb" id="9823-ENSSSCP00000025941"/>
<dbReference type="PeptideAtlas" id="Q29594"/>
<dbReference type="GeneID" id="100627332"/>
<dbReference type="KEGG" id="ssc:100627332"/>
<dbReference type="CTD" id="1152"/>
<dbReference type="eggNOG" id="KOG3581">
    <property type="taxonomic scope" value="Eukaryota"/>
</dbReference>
<dbReference type="InParanoid" id="Q29594"/>
<dbReference type="OrthoDB" id="430219at2759"/>
<dbReference type="Proteomes" id="UP000008227">
    <property type="component" value="Unplaced"/>
</dbReference>
<dbReference type="Proteomes" id="UP000314985">
    <property type="component" value="Unplaced"/>
</dbReference>
<dbReference type="Proteomes" id="UP000694570">
    <property type="component" value="Unplaced"/>
</dbReference>
<dbReference type="Proteomes" id="UP000694571">
    <property type="component" value="Unplaced"/>
</dbReference>
<dbReference type="Proteomes" id="UP000694720">
    <property type="component" value="Unplaced"/>
</dbReference>
<dbReference type="Proteomes" id="UP000694722">
    <property type="component" value="Unplaced"/>
</dbReference>
<dbReference type="Proteomes" id="UP000694723">
    <property type="component" value="Unplaced"/>
</dbReference>
<dbReference type="Proteomes" id="UP000694724">
    <property type="component" value="Unplaced"/>
</dbReference>
<dbReference type="Proteomes" id="UP000694725">
    <property type="component" value="Unplaced"/>
</dbReference>
<dbReference type="Proteomes" id="UP000694726">
    <property type="component" value="Unplaced"/>
</dbReference>
<dbReference type="Proteomes" id="UP000694727">
    <property type="component" value="Unplaced"/>
</dbReference>
<dbReference type="Proteomes" id="UP000694728">
    <property type="component" value="Unplaced"/>
</dbReference>
<dbReference type="GO" id="GO:0005829">
    <property type="term" value="C:cytosol"/>
    <property type="evidence" value="ECO:0007669"/>
    <property type="project" value="UniProtKB-SubCell"/>
</dbReference>
<dbReference type="GO" id="GO:0005615">
    <property type="term" value="C:extracellular space"/>
    <property type="evidence" value="ECO:0000318"/>
    <property type="project" value="GO_Central"/>
</dbReference>
<dbReference type="GO" id="GO:0005739">
    <property type="term" value="C:mitochondrion"/>
    <property type="evidence" value="ECO:0000250"/>
    <property type="project" value="UniProtKB"/>
</dbReference>
<dbReference type="GO" id="GO:0005886">
    <property type="term" value="C:plasma membrane"/>
    <property type="evidence" value="ECO:0007669"/>
    <property type="project" value="UniProtKB-SubCell"/>
</dbReference>
<dbReference type="GO" id="GO:0005524">
    <property type="term" value="F:ATP binding"/>
    <property type="evidence" value="ECO:0007669"/>
    <property type="project" value="UniProtKB-KW"/>
</dbReference>
<dbReference type="GO" id="GO:0004111">
    <property type="term" value="F:creatine kinase activity"/>
    <property type="evidence" value="ECO:0000250"/>
    <property type="project" value="UniProtKB"/>
</dbReference>
<dbReference type="GO" id="GO:0046314">
    <property type="term" value="P:phosphocreatine biosynthetic process"/>
    <property type="evidence" value="ECO:0000318"/>
    <property type="project" value="GO_Central"/>
</dbReference>
<dbReference type="CDD" id="cd00716">
    <property type="entry name" value="creatine_kinase_like"/>
    <property type="match status" value="1"/>
</dbReference>
<dbReference type="FunFam" id="3.30.590.10:FF:000026">
    <property type="entry name" value="Creatine kinase B-type"/>
    <property type="match status" value="1"/>
</dbReference>
<dbReference type="FunFam" id="1.10.135.10:FF:000001">
    <property type="entry name" value="Creatine kinase M-type"/>
    <property type="match status" value="1"/>
</dbReference>
<dbReference type="Gene3D" id="1.10.135.10">
    <property type="entry name" value="ATP:guanido phosphotransferase, N-terminal domain"/>
    <property type="match status" value="1"/>
</dbReference>
<dbReference type="Gene3D" id="3.30.590.10">
    <property type="entry name" value="Glutamine synthetase/guanido kinase, catalytic domain"/>
    <property type="match status" value="1"/>
</dbReference>
<dbReference type="InterPro" id="IPR000749">
    <property type="entry name" value="ATP-guanido_PTrfase"/>
</dbReference>
<dbReference type="InterPro" id="IPR022415">
    <property type="entry name" value="ATP-guanido_PTrfase_AS"/>
</dbReference>
<dbReference type="InterPro" id="IPR022414">
    <property type="entry name" value="ATP-guanido_PTrfase_cat"/>
</dbReference>
<dbReference type="InterPro" id="IPR022413">
    <property type="entry name" value="ATP-guanido_PTrfase_N"/>
</dbReference>
<dbReference type="InterPro" id="IPR036802">
    <property type="entry name" value="ATP-guanido_PTrfase_N_sf"/>
</dbReference>
<dbReference type="InterPro" id="IPR014746">
    <property type="entry name" value="Gln_synth/guanido_kin_cat_dom"/>
</dbReference>
<dbReference type="PANTHER" id="PTHR11547">
    <property type="entry name" value="ARGININE OR CREATINE KINASE"/>
    <property type="match status" value="1"/>
</dbReference>
<dbReference type="PANTHER" id="PTHR11547:SF23">
    <property type="entry name" value="CREATINE KINASE B-TYPE"/>
    <property type="match status" value="1"/>
</dbReference>
<dbReference type="Pfam" id="PF00217">
    <property type="entry name" value="ATP-gua_Ptrans"/>
    <property type="match status" value="1"/>
</dbReference>
<dbReference type="Pfam" id="PF02807">
    <property type="entry name" value="ATP-gua_PtransN"/>
    <property type="match status" value="1"/>
</dbReference>
<dbReference type="SUPFAM" id="SSF55931">
    <property type="entry name" value="Glutamine synthetase/guanido kinase"/>
    <property type="match status" value="1"/>
</dbReference>
<dbReference type="SUPFAM" id="SSF48034">
    <property type="entry name" value="Guanido kinase N-terminal domain"/>
    <property type="match status" value="1"/>
</dbReference>
<dbReference type="PROSITE" id="PS00112">
    <property type="entry name" value="PHOSPHAGEN_KINASE"/>
    <property type="match status" value="1"/>
</dbReference>
<dbReference type="PROSITE" id="PS51510">
    <property type="entry name" value="PHOSPHAGEN_KINASE_C"/>
    <property type="match status" value="1"/>
</dbReference>
<dbReference type="PROSITE" id="PS51509">
    <property type="entry name" value="PHOSPHAGEN_KINASE_N"/>
    <property type="match status" value="1"/>
</dbReference>
<reference key="1">
    <citation type="submission" date="2006-09" db="EMBL/GenBank/DDBJ databases">
        <authorList>
            <person name="Uenishi H."/>
            <person name="Eguchi-Ogawa T."/>
            <person name="Shinkai H."/>
            <person name="Toki D."/>
            <person name="Awata T."/>
        </authorList>
    </citation>
    <scope>NUCLEOTIDE SEQUENCE [LARGE SCALE MRNA]</scope>
    <source>
        <tissue>Uterus</tissue>
    </source>
</reference>
<reference key="2">
    <citation type="journal article" date="1996" name="Mamm. Genome">
        <title>Evaluation and characterization of a porcine small intestine cDNA library: analysis of 839 clones.</title>
        <authorList>
            <person name="Winteroe A.K."/>
            <person name="Fredholm M."/>
            <person name="Davies W."/>
        </authorList>
    </citation>
    <scope>NUCLEOTIDE SEQUENCE [LARGE SCALE MRNA] OF 141-242</scope>
    <source>
        <tissue>Small intestine</tissue>
    </source>
</reference>
<feature type="chain" id="PRO_0000211968" description="Creatine kinase B-type">
    <location>
        <begin position="1"/>
        <end position="381"/>
    </location>
</feature>
<feature type="domain" description="Phosphagen kinase N-terminal" evidence="3">
    <location>
        <begin position="11"/>
        <end position="98"/>
    </location>
</feature>
<feature type="domain" description="Phosphagen kinase C-terminal" evidence="4">
    <location>
        <begin position="125"/>
        <end position="367"/>
    </location>
</feature>
<feature type="region of interest" description="Disordered" evidence="6">
    <location>
        <begin position="96"/>
        <end position="123"/>
    </location>
</feature>
<feature type="region of interest" description="Internal MTS-like signal" evidence="2">
    <location>
        <begin position="130"/>
        <end position="138"/>
    </location>
</feature>
<feature type="compositionally biased region" description="Basic and acidic residues" evidence="6">
    <location>
        <begin position="96"/>
        <end position="110"/>
    </location>
</feature>
<feature type="binding site" evidence="1">
    <location>
        <position position="72"/>
    </location>
    <ligand>
        <name>creatine</name>
        <dbReference type="ChEBI" id="CHEBI:57947"/>
    </ligand>
</feature>
<feature type="binding site" evidence="1">
    <location>
        <begin position="128"/>
        <end position="132"/>
    </location>
    <ligand>
        <name>ATP</name>
        <dbReference type="ChEBI" id="CHEBI:30616"/>
    </ligand>
</feature>
<feature type="binding site" evidence="1">
    <location>
        <position position="130"/>
    </location>
    <ligand>
        <name>ATP</name>
        <dbReference type="ChEBI" id="CHEBI:30616"/>
    </ligand>
</feature>
<feature type="binding site" evidence="1">
    <location>
        <position position="132"/>
    </location>
    <ligand>
        <name>ATP</name>
        <dbReference type="ChEBI" id="CHEBI:30616"/>
    </ligand>
</feature>
<feature type="binding site" evidence="1">
    <location>
        <position position="191"/>
    </location>
    <ligand>
        <name>ATP</name>
        <dbReference type="ChEBI" id="CHEBI:30616"/>
    </ligand>
</feature>
<feature type="binding site" evidence="1">
    <location>
        <position position="232"/>
    </location>
    <ligand>
        <name>creatine</name>
        <dbReference type="ChEBI" id="CHEBI:57947"/>
    </ligand>
</feature>
<feature type="binding site" evidence="1">
    <location>
        <position position="236"/>
    </location>
    <ligand>
        <name>ATP</name>
        <dbReference type="ChEBI" id="CHEBI:30616"/>
    </ligand>
</feature>
<feature type="binding site" evidence="1">
    <location>
        <position position="285"/>
    </location>
    <ligand>
        <name>creatine</name>
        <dbReference type="ChEBI" id="CHEBI:57947"/>
    </ligand>
</feature>
<feature type="binding site" evidence="1">
    <location>
        <begin position="292"/>
        <end position="296"/>
    </location>
    <ligand>
        <name>ATP</name>
        <dbReference type="ChEBI" id="CHEBI:30616"/>
    </ligand>
</feature>
<feature type="binding site" evidence="1">
    <location>
        <position position="292"/>
    </location>
    <ligand>
        <name>ATP</name>
        <dbReference type="ChEBI" id="CHEBI:30616"/>
    </ligand>
</feature>
<feature type="binding site" evidence="1">
    <location>
        <begin position="320"/>
        <end position="325"/>
    </location>
    <ligand>
        <name>ATP</name>
        <dbReference type="ChEBI" id="CHEBI:30616"/>
    </ligand>
</feature>
<feature type="binding site" evidence="1">
    <location>
        <position position="320"/>
    </location>
    <ligand>
        <name>ATP</name>
        <dbReference type="ChEBI" id="CHEBI:30616"/>
    </ligand>
</feature>
<feature type="binding site" evidence="1">
    <location>
        <position position="335"/>
    </location>
    <ligand>
        <name>ATP</name>
        <dbReference type="ChEBI" id="CHEBI:30616"/>
    </ligand>
</feature>
<feature type="modified residue" description="Phosphoserine" evidence="1">
    <location>
        <position position="4"/>
    </location>
</feature>
<feature type="modified residue" description="Phosphothreonine" evidence="1">
    <location>
        <position position="35"/>
    </location>
</feature>
<feature type="modified residue" description="Phosphotyrosine" evidence="2">
    <location>
        <position position="125"/>
    </location>
</feature>
<feature type="modified residue" description="Phosphoserine" evidence="1">
    <location>
        <position position="199"/>
    </location>
</feature>
<feature type="modified residue" description="3'-nitrotyrosine" evidence="2">
    <location>
        <position position="269"/>
    </location>
</feature>
<feature type="modified residue" description="Phosphothreonine" evidence="2">
    <location>
        <position position="322"/>
    </location>
</feature>
<feature type="cross-link" description="Glycyl lysine isopeptide (Lys-Gly) (interchain with G-Cter in ubiquitin)" evidence="1">
    <location>
        <position position="45"/>
    </location>
</feature>
<feature type="cross-link" description="Glycyl lysine isopeptide (Lys-Gly) (interchain with G-Cter in ubiquitin)" evidence="1">
    <location>
        <position position="101"/>
    </location>
</feature>
<feature type="cross-link" description="Glycyl lysine isopeptide (Lys-Gly) (interchain with G-Cter in ubiquitin)" evidence="1">
    <location>
        <position position="107"/>
    </location>
</feature>
<feature type="cross-link" description="Glycyl lysine isopeptide (Lys-Gly) (interchain with G-Cter in ubiquitin)" evidence="1">
    <location>
        <position position="381"/>
    </location>
</feature>
<feature type="sequence conflict" description="In Ref. 2; CAA23244." evidence="7" ref="2">
    <original>R</original>
    <variation>A</variation>
    <location>
        <position position="209"/>
    </location>
</feature>
<keyword id="KW-0067">ATP-binding</keyword>
<keyword id="KW-1003">Cell membrane</keyword>
<keyword id="KW-0963">Cytoplasm</keyword>
<keyword id="KW-1017">Isopeptide bond</keyword>
<keyword id="KW-0418">Kinase</keyword>
<keyword id="KW-0472">Membrane</keyword>
<keyword id="KW-0496">Mitochondrion</keyword>
<keyword id="KW-0944">Nitration</keyword>
<keyword id="KW-0547">Nucleotide-binding</keyword>
<keyword id="KW-0597">Phosphoprotein</keyword>
<keyword id="KW-1185">Reference proteome</keyword>
<keyword id="KW-0808">Transferase</keyword>
<keyword id="KW-0832">Ubl conjugation</keyword>
<sequence>MPFSNSHNTLKLRFPAEDEFPDLSGHNNHMAKVLTPELYAELRAKSTPSGFTLDDVIQAGVDNPGHPYIMTVGCVAGDEESYDVFKELFDPIIEDRHGGYKPSDEHKTDLNPDNLQGGDDLDPNYVLSSRVRTGRSIRGFCLPPHCSRGERRAIEKLAVEALSSLDGDLAGRYYALKSMTEAEQQQLIDDHFLFDKPVSPLLLASGMARDWPDARGIWHNDNKTFLVWINEEDHLRVISMQKGGNMKEVFTRFCNGLTQIETLFKSKNYEFMWNPHLGYILTCPSNLGTGLRAGVHIKLPHLGKHEKFPEVLKRLRLQKRGTGGVDTAAVGGVFDVSNADRLGFSEVELVQMVVDGVKLLIEMEQRLEQGQAIDDLVPAQK</sequence>
<comment type="function">
    <text evidence="2">Reversibly catalyzes the transfer of phosphate between ATP and various phosphogens (e.g. creatine phosphate). Creatine kinase isoenzymes play a central role in energy transduction in tissues with large, fluctuating energy demands, such as skeletal muscle, heart, brain and spermatozoa. Acts as a key regulator of adaptive thermogenesis as part of the futile creatine cycle: localizes to the mitochondria of thermogenic fat cells and acts by mediating phosphorylation of creatine to initiate a futile cycle of creatine phosphorylation and dephosphorylation. During the futile creatine cycle, creatine and N-phosphocreatine are in a futile cycle, which dissipates the high energy charge of N-phosphocreatine as heat without performing any mechanical or chemical work.</text>
</comment>
<comment type="catalytic activity">
    <reaction evidence="2 5">
        <text>creatine + ATP = N-phosphocreatine + ADP + H(+)</text>
        <dbReference type="Rhea" id="RHEA:17157"/>
        <dbReference type="ChEBI" id="CHEBI:15378"/>
        <dbReference type="ChEBI" id="CHEBI:30616"/>
        <dbReference type="ChEBI" id="CHEBI:57947"/>
        <dbReference type="ChEBI" id="CHEBI:58092"/>
        <dbReference type="ChEBI" id="CHEBI:456216"/>
        <dbReference type="EC" id="2.7.3.2"/>
    </reaction>
    <physiologicalReaction direction="left-to-right" evidence="2">
        <dbReference type="Rhea" id="RHEA:17158"/>
    </physiologicalReaction>
</comment>
<comment type="subunit">
    <text evidence="1">Dimer of identical or non-identical chains, which can be either B (brain type) or M (muscle type). With MM being the major form in skeletal muscle and myocardium, MB existing in myocardium, and BB existing in many tissues, especially brain. Interacts with SLC12A6 (via C-terminus); the interaction may be required for SLC12A6 potassium-chloride cotransport activity (By similarity).</text>
</comment>
<comment type="subcellular location">
    <subcellularLocation>
        <location evidence="2">Cytoplasm</location>
        <location evidence="2">Cytosol</location>
    </subcellularLocation>
    <subcellularLocation>
        <location evidence="2">Mitochondrion</location>
    </subcellularLocation>
    <subcellularLocation>
        <location evidence="1">Cell membrane</location>
    </subcellularLocation>
    <text evidence="2">Localizes to the mitochondria of thermogenic fat cells via the internal MTS-like signal (iMTS-L) region.</text>
</comment>
<comment type="domain">
    <text evidence="2">The internal MTS-like signal (iMTS-L) mediates targeting to mitochondria thermogenic fat cells.</text>
</comment>
<comment type="PTM">
    <text evidence="1">Ubiquitinated by the ECS(ASB9) complex, leading to its degradation by the proteasome.</text>
</comment>
<comment type="similarity">
    <text evidence="4">Belongs to the ATP:guanido phosphotransferase family.</text>
</comment>
<evidence type="ECO:0000250" key="1">
    <source>
        <dbReference type="UniProtKB" id="P12277"/>
    </source>
</evidence>
<evidence type="ECO:0000250" key="2">
    <source>
        <dbReference type="UniProtKB" id="Q04447"/>
    </source>
</evidence>
<evidence type="ECO:0000255" key="3">
    <source>
        <dbReference type="PROSITE-ProRule" id="PRU00842"/>
    </source>
</evidence>
<evidence type="ECO:0000255" key="4">
    <source>
        <dbReference type="PROSITE-ProRule" id="PRU00843"/>
    </source>
</evidence>
<evidence type="ECO:0000255" key="5">
    <source>
        <dbReference type="PROSITE-ProRule" id="PRU10029"/>
    </source>
</evidence>
<evidence type="ECO:0000256" key="6">
    <source>
        <dbReference type="SAM" id="MobiDB-lite"/>
    </source>
</evidence>
<evidence type="ECO:0000305" key="7"/>
<accession>Q29594</accession>